<organism>
    <name type="scientific">Chlorobium limicola (strain DSM 245 / NBRC 103803 / 6330)</name>
    <dbReference type="NCBI Taxonomy" id="290315"/>
    <lineage>
        <taxon>Bacteria</taxon>
        <taxon>Pseudomonadati</taxon>
        <taxon>Chlorobiota</taxon>
        <taxon>Chlorobiia</taxon>
        <taxon>Chlorobiales</taxon>
        <taxon>Chlorobiaceae</taxon>
        <taxon>Chlorobium/Pelodictyon group</taxon>
        <taxon>Chlorobium</taxon>
    </lineage>
</organism>
<keyword id="KW-0997">Cell inner membrane</keyword>
<keyword id="KW-1003">Cell membrane</keyword>
<keyword id="KW-0143">Chaperone</keyword>
<keyword id="KW-0472">Membrane</keyword>
<keyword id="KW-0653">Protein transport</keyword>
<keyword id="KW-0812">Transmembrane</keyword>
<keyword id="KW-1133">Transmembrane helix</keyword>
<keyword id="KW-0813">Transport</keyword>
<sequence length="583" mass="64924">MDRNSVTGLALIALIMIVWLQFMSPDKKSVQPDNRPKAQTTATVSQEKTEAPAALRSDTFGVFAEASTGAEELVTVDNELFTMTLSSKGATIKSVVLKNHLDGQLKPFDLVSSHDKGALSLLFLNVEGKKIDTRELYFRLVSQEKKQTLSGKKIAVVRYRLDINPQQAIDIVYRFSGNSYKVDYDVKLTGFDNALAGNEYQLQWDGGLAYSEKNREDESHNALAGAFLGGSLVKIDASKENQTYREEQSGEAGWVAVRNKYFVAALIPGSKTEGIYLEGKKGSGHFEEYLASLKMSVPSTEKVASNHFSLYIGPLDYNTVKTLDANLEKIMDFGWDWLTRPFAEYVILPVFTWMNGFISNYGLIIIIFALLIKLVTYPLSMASTKSMKKMAALQPMLKELQEKYKDNPAKLQSELGRIYKEAGVNPLGGCLPVVLQMPLLFAMFYVFRSSIQLRHHGFLWAKDLSVPDSILDFGFSIPVYGDHIAVFPILMGVTVFIQQKITPTTQSNDQMKMMLYIFPVTMLLFFNNLPAGLGLYYLMFNVFSVAQQFYINSTTSTDDVPKAALEAASAAVASKKKKGSSKK</sequence>
<accession>B3EIM7</accession>
<proteinExistence type="inferred from homology"/>
<protein>
    <recommendedName>
        <fullName evidence="1">Membrane protein insertase YidC</fullName>
    </recommendedName>
    <alternativeName>
        <fullName evidence="1">Foldase YidC</fullName>
    </alternativeName>
    <alternativeName>
        <fullName evidence="1">Membrane integrase YidC</fullName>
    </alternativeName>
    <alternativeName>
        <fullName evidence="1">Membrane protein YidC</fullName>
    </alternativeName>
</protein>
<reference key="1">
    <citation type="submission" date="2008-05" db="EMBL/GenBank/DDBJ databases">
        <title>Complete sequence of Chlorobium limicola DSM 245.</title>
        <authorList>
            <consortium name="US DOE Joint Genome Institute"/>
            <person name="Lucas S."/>
            <person name="Copeland A."/>
            <person name="Lapidus A."/>
            <person name="Glavina del Rio T."/>
            <person name="Dalin E."/>
            <person name="Tice H."/>
            <person name="Bruce D."/>
            <person name="Goodwin L."/>
            <person name="Pitluck S."/>
            <person name="Schmutz J."/>
            <person name="Larimer F."/>
            <person name="Land M."/>
            <person name="Hauser L."/>
            <person name="Kyrpides N."/>
            <person name="Ovchinnikova G."/>
            <person name="Zhao F."/>
            <person name="Li T."/>
            <person name="Liu Z."/>
            <person name="Overmann J."/>
            <person name="Bryant D.A."/>
            <person name="Richardson P."/>
        </authorList>
    </citation>
    <scope>NUCLEOTIDE SEQUENCE [LARGE SCALE GENOMIC DNA]</scope>
    <source>
        <strain>DSM 245 / NBRC 103803 / 6330</strain>
    </source>
</reference>
<comment type="function">
    <text evidence="1">Required for the insertion and/or proper folding and/or complex formation of integral membrane proteins into the membrane. Involved in integration of membrane proteins that insert both dependently and independently of the Sec translocase complex, as well as at least some lipoproteins. Aids folding of multispanning membrane proteins.</text>
</comment>
<comment type="subunit">
    <text evidence="1">Interacts with the Sec translocase complex via SecD. Specifically interacts with transmembrane segments of nascent integral membrane proteins during membrane integration.</text>
</comment>
<comment type="subcellular location">
    <subcellularLocation>
        <location evidence="1">Cell inner membrane</location>
        <topology evidence="1">Multi-pass membrane protein</topology>
    </subcellularLocation>
</comment>
<comment type="similarity">
    <text evidence="1">Belongs to the OXA1/ALB3/YidC family. Type 1 subfamily.</text>
</comment>
<name>YIDC_CHLL2</name>
<feature type="chain" id="PRO_1000187648" description="Membrane protein insertase YidC">
    <location>
        <begin position="1"/>
        <end position="583"/>
    </location>
</feature>
<feature type="transmembrane region" description="Helical" evidence="1">
    <location>
        <begin position="5"/>
        <end position="25"/>
    </location>
</feature>
<feature type="transmembrane region" description="Helical" evidence="1">
    <location>
        <begin position="341"/>
        <end position="361"/>
    </location>
</feature>
<feature type="transmembrane region" description="Helical" evidence="1">
    <location>
        <begin position="362"/>
        <end position="382"/>
    </location>
</feature>
<feature type="transmembrane region" description="Helical" evidence="1">
    <location>
        <begin position="427"/>
        <end position="447"/>
    </location>
</feature>
<feature type="transmembrane region" description="Helical" evidence="1">
    <location>
        <begin position="477"/>
        <end position="497"/>
    </location>
</feature>
<feature type="transmembrane region" description="Helical" evidence="1">
    <location>
        <begin position="515"/>
        <end position="535"/>
    </location>
</feature>
<feature type="region of interest" description="Disordered" evidence="2">
    <location>
        <begin position="28"/>
        <end position="50"/>
    </location>
</feature>
<feature type="compositionally biased region" description="Polar residues" evidence="2">
    <location>
        <begin position="37"/>
        <end position="46"/>
    </location>
</feature>
<dbReference type="EMBL" id="CP001097">
    <property type="protein sequence ID" value="ACD91539.1"/>
    <property type="molecule type" value="Genomic_DNA"/>
</dbReference>
<dbReference type="RefSeq" id="WP_012467403.1">
    <property type="nucleotide sequence ID" value="NC_010803.1"/>
</dbReference>
<dbReference type="SMR" id="B3EIM7"/>
<dbReference type="STRING" id="290315.Clim_2521"/>
<dbReference type="KEGG" id="cli:Clim_2521"/>
<dbReference type="eggNOG" id="COG0706">
    <property type="taxonomic scope" value="Bacteria"/>
</dbReference>
<dbReference type="HOGENOM" id="CLU_016535_2_0_10"/>
<dbReference type="OrthoDB" id="9780552at2"/>
<dbReference type="Proteomes" id="UP000008841">
    <property type="component" value="Chromosome"/>
</dbReference>
<dbReference type="GO" id="GO:0005886">
    <property type="term" value="C:plasma membrane"/>
    <property type="evidence" value="ECO:0007669"/>
    <property type="project" value="UniProtKB-SubCell"/>
</dbReference>
<dbReference type="GO" id="GO:0032977">
    <property type="term" value="F:membrane insertase activity"/>
    <property type="evidence" value="ECO:0007669"/>
    <property type="project" value="InterPro"/>
</dbReference>
<dbReference type="GO" id="GO:0051205">
    <property type="term" value="P:protein insertion into membrane"/>
    <property type="evidence" value="ECO:0007669"/>
    <property type="project" value="TreeGrafter"/>
</dbReference>
<dbReference type="GO" id="GO:0015031">
    <property type="term" value="P:protein transport"/>
    <property type="evidence" value="ECO:0007669"/>
    <property type="project" value="UniProtKB-KW"/>
</dbReference>
<dbReference type="CDD" id="cd20070">
    <property type="entry name" value="5TM_YidC_Alb3"/>
    <property type="match status" value="1"/>
</dbReference>
<dbReference type="CDD" id="cd19961">
    <property type="entry name" value="EcYidC-like_peri"/>
    <property type="match status" value="1"/>
</dbReference>
<dbReference type="Gene3D" id="2.70.98.90">
    <property type="match status" value="1"/>
</dbReference>
<dbReference type="HAMAP" id="MF_01810">
    <property type="entry name" value="YidC_type1"/>
    <property type="match status" value="1"/>
</dbReference>
<dbReference type="InterPro" id="IPR019998">
    <property type="entry name" value="Membr_insert_YidC"/>
</dbReference>
<dbReference type="InterPro" id="IPR028053">
    <property type="entry name" value="Membr_insert_YidC_N"/>
</dbReference>
<dbReference type="InterPro" id="IPR001708">
    <property type="entry name" value="YidC/ALB3/OXA1/COX18"/>
</dbReference>
<dbReference type="InterPro" id="IPR028055">
    <property type="entry name" value="YidC/Oxa/ALB_C"/>
</dbReference>
<dbReference type="InterPro" id="IPR047196">
    <property type="entry name" value="YidC_ALB_C"/>
</dbReference>
<dbReference type="InterPro" id="IPR038221">
    <property type="entry name" value="YidC_periplasmic_sf"/>
</dbReference>
<dbReference type="NCBIfam" id="TIGR03593">
    <property type="entry name" value="yidC_nterm"/>
    <property type="match status" value="1"/>
</dbReference>
<dbReference type="NCBIfam" id="TIGR03592">
    <property type="entry name" value="yidC_oxa1_cterm"/>
    <property type="match status" value="1"/>
</dbReference>
<dbReference type="PANTHER" id="PTHR12428:SF65">
    <property type="entry name" value="CYTOCHROME C OXIDASE ASSEMBLY PROTEIN COX18, MITOCHONDRIAL"/>
    <property type="match status" value="1"/>
</dbReference>
<dbReference type="PANTHER" id="PTHR12428">
    <property type="entry name" value="OXA1"/>
    <property type="match status" value="1"/>
</dbReference>
<dbReference type="Pfam" id="PF02096">
    <property type="entry name" value="60KD_IMP"/>
    <property type="match status" value="1"/>
</dbReference>
<dbReference type="Pfam" id="PF14849">
    <property type="entry name" value="YidC_periplas"/>
    <property type="match status" value="1"/>
</dbReference>
<dbReference type="PRINTS" id="PR00701">
    <property type="entry name" value="60KDINNERMP"/>
</dbReference>
<dbReference type="PRINTS" id="PR01900">
    <property type="entry name" value="YIDCPROTEIN"/>
</dbReference>
<gene>
    <name evidence="1" type="primary">yidC</name>
    <name type="ordered locus">Clim_2521</name>
</gene>
<evidence type="ECO:0000255" key="1">
    <source>
        <dbReference type="HAMAP-Rule" id="MF_01810"/>
    </source>
</evidence>
<evidence type="ECO:0000256" key="2">
    <source>
        <dbReference type="SAM" id="MobiDB-lite"/>
    </source>
</evidence>